<organism>
    <name type="scientific">Canis lupus familiaris</name>
    <name type="common">Dog</name>
    <name type="synonym">Canis familiaris</name>
    <dbReference type="NCBI Taxonomy" id="9615"/>
    <lineage>
        <taxon>Eukaryota</taxon>
        <taxon>Metazoa</taxon>
        <taxon>Chordata</taxon>
        <taxon>Craniata</taxon>
        <taxon>Vertebrata</taxon>
        <taxon>Euteleostomi</taxon>
        <taxon>Mammalia</taxon>
        <taxon>Eutheria</taxon>
        <taxon>Laurasiatheria</taxon>
        <taxon>Carnivora</taxon>
        <taxon>Caniformia</taxon>
        <taxon>Canidae</taxon>
        <taxon>Canis</taxon>
    </lineage>
</organism>
<feature type="chain" id="PRO_0000067015" description="Inversin">
    <location>
        <begin position="1"/>
        <end position="1081"/>
    </location>
</feature>
<feature type="repeat" description="ANK 1">
    <location>
        <begin position="13"/>
        <end position="42"/>
    </location>
</feature>
<feature type="repeat" description="ANK 2">
    <location>
        <begin position="47"/>
        <end position="76"/>
    </location>
</feature>
<feature type="repeat" description="ANK 3">
    <location>
        <begin position="80"/>
        <end position="110"/>
    </location>
</feature>
<feature type="repeat" description="ANK 4">
    <location>
        <begin position="113"/>
        <end position="144"/>
    </location>
</feature>
<feature type="repeat" description="ANK 5">
    <location>
        <begin position="148"/>
        <end position="177"/>
    </location>
</feature>
<feature type="repeat" description="ANK 6">
    <location>
        <begin position="181"/>
        <end position="213"/>
    </location>
</feature>
<feature type="repeat" description="ANK 7">
    <location>
        <begin position="220"/>
        <end position="250"/>
    </location>
</feature>
<feature type="repeat" description="ANK 8">
    <location>
        <begin position="254"/>
        <end position="283"/>
    </location>
</feature>
<feature type="repeat" description="ANK 9">
    <location>
        <begin position="288"/>
        <end position="317"/>
    </location>
</feature>
<feature type="repeat" description="ANK 10">
    <location>
        <begin position="321"/>
        <end position="350"/>
    </location>
</feature>
<feature type="repeat" description="ANK 11">
    <location>
        <begin position="356"/>
        <end position="385"/>
    </location>
</feature>
<feature type="repeat" description="ANK 12">
    <location>
        <begin position="389"/>
        <end position="418"/>
    </location>
</feature>
<feature type="repeat" description="ANK 13">
    <location>
        <begin position="422"/>
        <end position="451"/>
    </location>
</feature>
<feature type="repeat" description="ANK 14">
    <location>
        <begin position="455"/>
        <end position="484"/>
    </location>
</feature>
<feature type="repeat" description="ANK 15">
    <location>
        <begin position="488"/>
        <end position="517"/>
    </location>
</feature>
<feature type="repeat" description="ANK 16">
    <location>
        <begin position="523"/>
        <end position="553"/>
    </location>
</feature>
<feature type="domain" description="IQ 1" evidence="2">
    <location>
        <begin position="555"/>
        <end position="584"/>
    </location>
</feature>
<feature type="domain" description="IQ 2" evidence="2">
    <location>
        <begin position="917"/>
        <end position="946"/>
    </location>
</feature>
<feature type="repeat" description="ANK 17">
    <location>
        <begin position="1022"/>
        <end position="1050"/>
    </location>
</feature>
<feature type="region of interest" description="Disordered" evidence="3">
    <location>
        <begin position="589"/>
        <end position="889"/>
    </location>
</feature>
<feature type="region of interest" description="Disordered" evidence="3">
    <location>
        <begin position="1051"/>
        <end position="1081"/>
    </location>
</feature>
<feature type="short sequence motif" description="D-box 1">
    <location>
        <begin position="490"/>
        <end position="498"/>
    </location>
</feature>
<feature type="short sequence motif" description="D-box 2">
    <location>
        <begin position="910"/>
        <end position="918"/>
    </location>
</feature>
<feature type="compositionally biased region" description="Basic and acidic residues" evidence="3">
    <location>
        <begin position="589"/>
        <end position="610"/>
    </location>
</feature>
<feature type="compositionally biased region" description="Polar residues" evidence="3">
    <location>
        <begin position="638"/>
        <end position="649"/>
    </location>
</feature>
<feature type="compositionally biased region" description="Basic and acidic residues" evidence="3">
    <location>
        <begin position="688"/>
        <end position="698"/>
    </location>
</feature>
<feature type="compositionally biased region" description="Basic and acidic residues" evidence="3">
    <location>
        <begin position="724"/>
        <end position="740"/>
    </location>
</feature>
<feature type="compositionally biased region" description="Basic and acidic residues" evidence="3">
    <location>
        <begin position="772"/>
        <end position="785"/>
    </location>
</feature>
<feature type="compositionally biased region" description="Polar residues" evidence="3">
    <location>
        <begin position="863"/>
        <end position="872"/>
    </location>
</feature>
<feature type="compositionally biased region" description="Polar residues" evidence="3">
    <location>
        <begin position="1051"/>
        <end position="1061"/>
    </location>
</feature>
<feature type="modified residue" description="3-hydroxyasparagine" evidence="1">
    <location>
        <position position="75"/>
    </location>
</feature>
<feature type="splice variant" id="VSP_014494" description="In isoform 2." evidence="6">
    <location>
        <begin position="525"/>
        <end position="595"/>
    </location>
</feature>
<sequence length="1081" mass="119540">MNRSENLFFSGSSLASQVHAAAINGDKGALHRLIIGNSALKDKEDQFGRTPLMYCVLADRLDCADALLKAGADVNKTDHSQRTALHLAAQKGNYRFMKLLLTRRANWMQKDLEEMTPLHLATRHKSPKCLALLLKFMAPGEVDTQDKNKQTALHWSAYYNNPEHVKLLIKHDSNIGIPDVEGKIPLHWAANHKDPSAVHTVRCILDAAPTESLLNWQDYEGRTPLHFAVADGNVTVVDVLTSYESCNITSYDNLFRTPLHWAALLGHAQIVHLLLERNKSGTIPSDSQGATPLHYAAQSNFAETVKVFLKHPSVKDDSDLEGRTSFMWAAGKGSDDVLRTMLSLKSDIDINMADKYGGTALHAAALSGHVSTVKLLLENNAQVDATDVMKHTPLFRACEMGHKDVIQTLIKGGARVDLVDQDGHSLLHWAALGGNADVCQILIENKINPNVQDYAGRTPLQCAAYGGYINCMAVLMENNADPNIQDKEGRTALHWSCNNGYLDAIKLLLDFAAFPNQMENNEERYTPLDYALLGERHEVIQFMLEHGALSIAAIQDIAAFKIQAVYKGYKVRKAFRDRKNLLMKHEQLRKDAAAKKREEENKRREAEQQKGRLSPDSCRPQALPCLPNTQTDSHKQSRAPSKQPPSSEAAQDPDKRACRGGPGRVSPSRAPQKEQHLSPDVQGTVPRKPNESPREQCKGRSACVHFSPSEGSDGKRHPGVSSVEKSRSETGGEQRCDKGKGFLKQPSCLRVAGPGDEGEDPGWAAASLPQQDGHRKPSRRQDTASKAKCTSQKRRVQELRGGRHSPAGSSRPGSAKGEVVHAGPNALQHRTPRNKTTQDKLAGGIYSDLPQNTEVLRSGVRKSGTSTLSEDAQVSKETDPAPGPLSGQSVNIDLLPVELRLQIIQKERSRKELFRKKNKAAAVIQRAWRSYQLRKHLSHLLHMKELGARDVDRWNRECLALLLQVWRKDLELTPPKTTAVTRTTKSLSKGSSGAKSTRHSVLKQIYGCSQEGKVPHSTRSSRTHSVLHLNSVSNLQCIHLLENSGRSKNFSYNLQSATPPKTKTKLRPSLEEECVRGSWNS</sequence>
<reference key="1">
    <citation type="journal article" date="2004" name="Genomics">
        <title>Analysis of multiple Invs transcripts in mouse and MDCK cells.</title>
        <authorList>
            <person name="Ward H.H."/>
            <person name="Wang J."/>
            <person name="Phillips C."/>
        </authorList>
    </citation>
    <scope>NUCLEOTIDE SEQUENCE [MRNA] (ISOFORMS 1 AND 2)</scope>
</reference>
<reference key="2">
    <citation type="journal article" date="2002" name="Hum. Mol. Genet.">
        <title>Expression analyses and interaction with the anaphase promoting complex protein Apc2 suggest a role for inversin in primary cilia and involvement in the cell cycle.</title>
        <authorList>
            <person name="Morgan D."/>
            <person name="Eley L."/>
            <person name="Sayer J."/>
            <person name="Strachan T."/>
            <person name="Yates L.M."/>
            <person name="Craighead A.S."/>
            <person name="Goodship J.A."/>
        </authorList>
    </citation>
    <scope>DEVELOPMENTAL STAGE</scope>
</reference>
<reference key="3">
    <citation type="journal article" date="2004" name="J. Am. Soc. Nephrol.">
        <title>The Invs gene encodes a microtubule-associated protein.</title>
        <authorList>
            <person name="Nuernberger J."/>
            <person name="Kribben A."/>
            <person name="Opazo Saez A."/>
            <person name="Heusch G."/>
            <person name="Philipp T."/>
            <person name="Phillips C.L."/>
        </authorList>
    </citation>
    <scope>SUBCELLULAR LOCATION</scope>
    <scope>INTERACTION WITH MICROTUBULES</scope>
</reference>
<evidence type="ECO:0000250" key="1"/>
<evidence type="ECO:0000255" key="2">
    <source>
        <dbReference type="PROSITE-ProRule" id="PRU00116"/>
    </source>
</evidence>
<evidence type="ECO:0000256" key="3">
    <source>
        <dbReference type="SAM" id="MobiDB-lite"/>
    </source>
</evidence>
<evidence type="ECO:0000269" key="4">
    <source>
    </source>
</evidence>
<evidence type="ECO:0000269" key="5">
    <source>
    </source>
</evidence>
<evidence type="ECO:0000303" key="6">
    <source>
    </source>
</evidence>
<accession>Q6JAN1</accession>
<gene>
    <name type="primary">INVS</name>
    <name type="synonym">INV</name>
    <name type="synonym">NPHP2</name>
</gene>
<protein>
    <recommendedName>
        <fullName>Inversin</fullName>
    </recommendedName>
    <alternativeName>
        <fullName>Inversion of embryo turning protein</fullName>
    </alternativeName>
    <alternativeName>
        <fullName>Nephrocystin-2</fullName>
    </alternativeName>
</protein>
<keyword id="KW-0025">Alternative splicing</keyword>
<keyword id="KW-0040">ANK repeat</keyword>
<keyword id="KW-0112">Calmodulin-binding</keyword>
<keyword id="KW-0963">Cytoplasm</keyword>
<keyword id="KW-0206">Cytoskeleton</keyword>
<keyword id="KW-0217">Developmental protein</keyword>
<keyword id="KW-0379">Hydroxylation</keyword>
<keyword id="KW-0472">Membrane</keyword>
<keyword id="KW-0493">Microtubule</keyword>
<keyword id="KW-0539">Nucleus</keyword>
<keyword id="KW-1185">Reference proteome</keyword>
<keyword id="KW-0677">Repeat</keyword>
<keyword id="KW-0832">Ubl conjugation</keyword>
<keyword id="KW-0879">Wnt signaling pathway</keyword>
<name>INVS_CANLF</name>
<comment type="function">
    <text evidence="1">Required for normal renal development and establishment of left-right axis. Probably acts as a molecular switch between different Wnt signaling pathways. Inhibits the canonical Wnt pathway by targeting cytoplasmic disheveled (DVL1) for degradation by the ubiquitin-proteasome. This suggests that it is required in renal development to oppose the repression of terminal differentiation of tubular epithelial cells by Wnt signaling (By similarity). Involved in the organization of apical junctions in kidney cells together with NPHP1, NPHP4 and RPGRIP1L/NPHP8 (By similarity). Does not seem to be strictly required for ciliogenesis (By similarity).</text>
</comment>
<comment type="subunit">
    <text evidence="1 5">Binds calmodulin via its IQ domains. Interacts with APC2. Interacts with alpha-, beta-, and gamma-catenin. Interacts with N-cadherin (CDH2). Interacts with NPHP1. Interacts with DVL1, PRICKLE (PRICKLE1 or PRICKLE2) and Strabismus (VANGL1 or VANGL2). Component of a complex containing at least ANKS6, INVS, NEK8 and NPHP3. ANKS6 may organize complex assembly by linking INVS and NPHP3 to NEK8 and INVS may target the complex to the proximal ciliary axoneme. Interacts with IQCB1; the interaction likely requires additional interactors (By similarity). Interacts with microtubules.</text>
</comment>
<comment type="subcellular location">
    <subcellularLocation>
        <location evidence="5">Cytoplasm</location>
        <location evidence="5">Cytoskeleton</location>
    </subcellularLocation>
    <subcellularLocation>
        <location evidence="5">Membrane</location>
        <topology evidence="5">Peripheral membrane protein</topology>
    </subcellularLocation>
    <subcellularLocation>
        <location evidence="5">Cytoplasm</location>
        <location evidence="5">Cytoskeleton</location>
        <location evidence="5">Spindle</location>
    </subcellularLocation>
    <subcellularLocation>
        <location evidence="5">Nucleus</location>
    </subcellularLocation>
    <text evidence="1">Frequently membrane-associated. Membrane localization is dependent upon cell-cell contacts and is redistributed when cell adhesion is disrupted after incubation of the cell monolayer with low-calcium/EGTA medium (By similarity). Associates with several components of the cytoskeleton including ciliary, random and polarized microtubules. During mitosis, it is recruited to mitotic spindle. Also nuclear.</text>
</comment>
<comment type="alternative products">
    <event type="alternative splicing"/>
    <isoform>
        <id>Q6JAN1-1</id>
        <name>1</name>
        <sequence type="displayed"/>
    </isoform>
    <isoform>
        <id>Q6JAN1-2</id>
        <name>2</name>
        <name>Exon 12 skipped</name>
        <sequence type="described" ref="VSP_014494"/>
    </isoform>
</comment>
<comment type="developmental stage">
    <text evidence="4">Nuclear prior to nuclear envelope breakdown. Localizes at the centrosomes in early prophase but in metaphase and anaphase, it localizes to the spindle poles In cells at late telophase undergoing cytokinesis it is detected at the midbody, a region of microtubule overlap (at protein level).</text>
</comment>
<comment type="domain">
    <text evidence="1">The D-box 1 (destruction box 1) mediates the interaction with APC2, and may act as a recognition signal for degradation via the ubiquitin-proteasome pathway.</text>
</comment>
<comment type="PTM">
    <text evidence="1">May be ubiquitinated via its interaction with APC2.</text>
</comment>
<comment type="PTM">
    <text evidence="1">Hydroxylated at Asn-75, most probably by HIF1AN.</text>
</comment>
<dbReference type="EMBL" id="AY539827">
    <property type="protein sequence ID" value="AAT07450.1"/>
    <property type="molecule type" value="mRNA"/>
</dbReference>
<dbReference type="RefSeq" id="NP_001003361.1">
    <molecule id="Q6JAN1-1"/>
    <property type="nucleotide sequence ID" value="NM_001003361.1"/>
</dbReference>
<dbReference type="RefSeq" id="XP_005626448.1">
    <property type="nucleotide sequence ID" value="XM_005626391.2"/>
</dbReference>
<dbReference type="RefSeq" id="XP_005626449.1">
    <property type="nucleotide sequence ID" value="XM_005626392.2"/>
</dbReference>
<dbReference type="RefSeq" id="XP_005626450.1">
    <property type="nucleotide sequence ID" value="XM_005626393.2"/>
</dbReference>
<dbReference type="RefSeq" id="XP_038536858.1">
    <molecule id="Q6JAN1-1"/>
    <property type="nucleotide sequence ID" value="XM_038680930.1"/>
</dbReference>
<dbReference type="RefSeq" id="XP_038536859.1">
    <molecule id="Q6JAN1-1"/>
    <property type="nucleotide sequence ID" value="XM_038680931.1"/>
</dbReference>
<dbReference type="RefSeq" id="XP_038536860.1">
    <molecule id="Q6JAN1-1"/>
    <property type="nucleotide sequence ID" value="XM_038680932.1"/>
</dbReference>
<dbReference type="RefSeq" id="XP_038536861.1">
    <molecule id="Q6JAN1-1"/>
    <property type="nucleotide sequence ID" value="XM_038680933.1"/>
</dbReference>
<dbReference type="SMR" id="Q6JAN1"/>
<dbReference type="FunCoup" id="Q6JAN1">
    <property type="interactions" value="420"/>
</dbReference>
<dbReference type="STRING" id="9615.ENSCAFP00000050118"/>
<dbReference type="PaxDb" id="9612-ENSCAFP00000003719"/>
<dbReference type="Ensembl" id="ENSCAFT00000004025.5">
    <molecule id="Q6JAN1-1"/>
    <property type="protein sequence ID" value="ENSCAFP00000003719.3"/>
    <property type="gene ID" value="ENSCAFG00000002552.6"/>
</dbReference>
<dbReference type="Ensembl" id="ENSCAFT00000042990.2">
    <molecule id="Q6JAN1-2"/>
    <property type="protein sequence ID" value="ENSCAFP00000041244.1"/>
    <property type="gene ID" value="ENSCAFG00000002552.6"/>
</dbReference>
<dbReference type="Ensembl" id="ENSCAFT00040038103.1">
    <molecule id="Q6JAN1-1"/>
    <property type="protein sequence ID" value="ENSCAFP00040033215.1"/>
    <property type="gene ID" value="ENSCAFG00040020482.1"/>
</dbReference>
<dbReference type="Ensembl" id="ENSCAFT00040038398.1">
    <molecule id="Q6JAN1-2"/>
    <property type="protein sequence ID" value="ENSCAFP00040033486.1"/>
    <property type="gene ID" value="ENSCAFG00040020482.1"/>
</dbReference>
<dbReference type="Ensembl" id="ENSCAFT00845014700.1">
    <molecule id="Q6JAN1-1"/>
    <property type="protein sequence ID" value="ENSCAFP00845011388.1"/>
    <property type="gene ID" value="ENSCAFG00845008291.1"/>
</dbReference>
<dbReference type="Ensembl" id="ENSCAFT00845014964.1">
    <molecule id="Q6JAN1-2"/>
    <property type="protein sequence ID" value="ENSCAFP00845011603.1"/>
    <property type="gene ID" value="ENSCAFG00845008291.1"/>
</dbReference>
<dbReference type="GeneID" id="442950"/>
<dbReference type="KEGG" id="cfa:442950"/>
<dbReference type="CTD" id="27130"/>
<dbReference type="VEuPathDB" id="HostDB:ENSCAFG00845008291"/>
<dbReference type="eggNOG" id="KOG0504">
    <property type="taxonomic scope" value="Eukaryota"/>
</dbReference>
<dbReference type="GeneTree" id="ENSGT00940000157688"/>
<dbReference type="HOGENOM" id="CLU_010082_0_0_1"/>
<dbReference type="InParanoid" id="Q6JAN1"/>
<dbReference type="OMA" id="DGHWKPS"/>
<dbReference type="OrthoDB" id="20872at2759"/>
<dbReference type="TreeFam" id="TF312824"/>
<dbReference type="Proteomes" id="UP000002254">
    <property type="component" value="Chromosome 11"/>
</dbReference>
<dbReference type="Proteomes" id="UP000694429">
    <property type="component" value="Unplaced"/>
</dbReference>
<dbReference type="Proteomes" id="UP000694542">
    <property type="component" value="Chromosome 11"/>
</dbReference>
<dbReference type="Proteomes" id="UP000805418">
    <property type="component" value="Chromosome 11"/>
</dbReference>
<dbReference type="Bgee" id="ENSCAFG00000002552">
    <property type="expression patterns" value="Expressed in metanephros cortex and 51 other cell types or tissues"/>
</dbReference>
<dbReference type="GO" id="GO:0005929">
    <property type="term" value="C:cilium"/>
    <property type="evidence" value="ECO:0000318"/>
    <property type="project" value="GO_Central"/>
</dbReference>
<dbReference type="GO" id="GO:0005737">
    <property type="term" value="C:cytoplasm"/>
    <property type="evidence" value="ECO:0007669"/>
    <property type="project" value="UniProtKB-KW"/>
</dbReference>
<dbReference type="GO" id="GO:0016020">
    <property type="term" value="C:membrane"/>
    <property type="evidence" value="ECO:0007669"/>
    <property type="project" value="UniProtKB-SubCell"/>
</dbReference>
<dbReference type="GO" id="GO:0005874">
    <property type="term" value="C:microtubule"/>
    <property type="evidence" value="ECO:0007669"/>
    <property type="project" value="UniProtKB-KW"/>
</dbReference>
<dbReference type="GO" id="GO:0005634">
    <property type="term" value="C:nucleus"/>
    <property type="evidence" value="ECO:0007669"/>
    <property type="project" value="UniProtKB-SubCell"/>
</dbReference>
<dbReference type="GO" id="GO:0005819">
    <property type="term" value="C:spindle"/>
    <property type="evidence" value="ECO:0007669"/>
    <property type="project" value="UniProtKB-SubCell"/>
</dbReference>
<dbReference type="GO" id="GO:0005516">
    <property type="term" value="F:calmodulin binding"/>
    <property type="evidence" value="ECO:0007669"/>
    <property type="project" value="UniProtKB-KW"/>
</dbReference>
<dbReference type="GO" id="GO:0001822">
    <property type="term" value="P:kidney development"/>
    <property type="evidence" value="ECO:0000318"/>
    <property type="project" value="GO_Central"/>
</dbReference>
<dbReference type="GO" id="GO:0090090">
    <property type="term" value="P:negative regulation of canonical Wnt signaling pathway"/>
    <property type="evidence" value="ECO:0000250"/>
    <property type="project" value="UniProtKB"/>
</dbReference>
<dbReference type="GO" id="GO:1904108">
    <property type="term" value="P:protein localization to ciliary inversin compartment"/>
    <property type="evidence" value="ECO:0000318"/>
    <property type="project" value="GO_Central"/>
</dbReference>
<dbReference type="GO" id="GO:0016055">
    <property type="term" value="P:Wnt signaling pathway"/>
    <property type="evidence" value="ECO:0007669"/>
    <property type="project" value="UniProtKB-KW"/>
</dbReference>
<dbReference type="CDD" id="cd23767">
    <property type="entry name" value="IQCD"/>
    <property type="match status" value="2"/>
</dbReference>
<dbReference type="FunFam" id="1.25.40.20:FF:000078">
    <property type="entry name" value="Inversin"/>
    <property type="match status" value="1"/>
</dbReference>
<dbReference type="FunFam" id="1.25.40.20:FF:000082">
    <property type="entry name" value="Inversin"/>
    <property type="match status" value="1"/>
</dbReference>
<dbReference type="FunFam" id="1.25.40.20:FF:000092">
    <property type="entry name" value="inversin isoform X1"/>
    <property type="match status" value="1"/>
</dbReference>
<dbReference type="FunFam" id="1.25.40.20:FF:000134">
    <property type="entry name" value="inversin isoform X1"/>
    <property type="match status" value="1"/>
</dbReference>
<dbReference type="FunFam" id="1.25.40.20:FF:000144">
    <property type="entry name" value="inversin isoform X1"/>
    <property type="match status" value="1"/>
</dbReference>
<dbReference type="Gene3D" id="1.25.40.20">
    <property type="entry name" value="Ankyrin repeat-containing domain"/>
    <property type="match status" value="5"/>
</dbReference>
<dbReference type="InterPro" id="IPR002110">
    <property type="entry name" value="Ankyrin_rpt"/>
</dbReference>
<dbReference type="InterPro" id="IPR036770">
    <property type="entry name" value="Ankyrin_rpt-contain_sf"/>
</dbReference>
<dbReference type="InterPro" id="IPR000048">
    <property type="entry name" value="IQ_motif_EF-hand-BS"/>
</dbReference>
<dbReference type="PANTHER" id="PTHR24126:SF14">
    <property type="entry name" value="ANK_REP_REGION DOMAIN-CONTAINING PROTEIN"/>
    <property type="match status" value="1"/>
</dbReference>
<dbReference type="PANTHER" id="PTHR24126">
    <property type="entry name" value="ANKYRIN REPEAT, PH AND SEC7 DOMAIN CONTAINING PROTEIN SECG-RELATED"/>
    <property type="match status" value="1"/>
</dbReference>
<dbReference type="Pfam" id="PF00023">
    <property type="entry name" value="Ank"/>
    <property type="match status" value="3"/>
</dbReference>
<dbReference type="Pfam" id="PF12796">
    <property type="entry name" value="Ank_2"/>
    <property type="match status" value="4"/>
</dbReference>
<dbReference type="Pfam" id="PF00612">
    <property type="entry name" value="IQ"/>
    <property type="match status" value="2"/>
</dbReference>
<dbReference type="PRINTS" id="PR01415">
    <property type="entry name" value="ANKYRIN"/>
</dbReference>
<dbReference type="SMART" id="SM00248">
    <property type="entry name" value="ANK"/>
    <property type="match status" value="15"/>
</dbReference>
<dbReference type="SMART" id="SM00015">
    <property type="entry name" value="IQ"/>
    <property type="match status" value="2"/>
</dbReference>
<dbReference type="SUPFAM" id="SSF48403">
    <property type="entry name" value="Ankyrin repeat"/>
    <property type="match status" value="2"/>
</dbReference>
<dbReference type="PROSITE" id="PS50297">
    <property type="entry name" value="ANK_REP_REGION"/>
    <property type="match status" value="1"/>
</dbReference>
<dbReference type="PROSITE" id="PS50088">
    <property type="entry name" value="ANK_REPEAT"/>
    <property type="match status" value="11"/>
</dbReference>
<dbReference type="PROSITE" id="PS50096">
    <property type="entry name" value="IQ"/>
    <property type="match status" value="2"/>
</dbReference>
<proteinExistence type="evidence at protein level"/>